<proteinExistence type="inferred from homology"/>
<name>Y2950_POLSJ</name>
<protein>
    <recommendedName>
        <fullName evidence="1">UPF0434 protein Bpro_2950</fullName>
    </recommendedName>
</protein>
<feature type="chain" id="PRO_0000291128" description="UPF0434 protein Bpro_2950">
    <location>
        <begin position="1"/>
        <end position="60"/>
    </location>
</feature>
<dbReference type="EMBL" id="CP000316">
    <property type="protein sequence ID" value="ABE44864.1"/>
    <property type="molecule type" value="Genomic_DNA"/>
</dbReference>
<dbReference type="RefSeq" id="WP_011483862.1">
    <property type="nucleotide sequence ID" value="NC_007948.1"/>
</dbReference>
<dbReference type="SMR" id="Q129C8"/>
<dbReference type="STRING" id="296591.Bpro_2950"/>
<dbReference type="KEGG" id="pol:Bpro_2950"/>
<dbReference type="eggNOG" id="COG2835">
    <property type="taxonomic scope" value="Bacteria"/>
</dbReference>
<dbReference type="HOGENOM" id="CLU_155659_3_1_4"/>
<dbReference type="OrthoDB" id="9812205at2"/>
<dbReference type="Proteomes" id="UP000001983">
    <property type="component" value="Chromosome"/>
</dbReference>
<dbReference type="GO" id="GO:0005829">
    <property type="term" value="C:cytosol"/>
    <property type="evidence" value="ECO:0007669"/>
    <property type="project" value="TreeGrafter"/>
</dbReference>
<dbReference type="FunFam" id="2.20.25.10:FF:000002">
    <property type="entry name" value="UPF0434 protein YcaR"/>
    <property type="match status" value="1"/>
</dbReference>
<dbReference type="Gene3D" id="2.20.25.10">
    <property type="match status" value="1"/>
</dbReference>
<dbReference type="HAMAP" id="MF_01187">
    <property type="entry name" value="UPF0434"/>
    <property type="match status" value="1"/>
</dbReference>
<dbReference type="InterPro" id="IPR005651">
    <property type="entry name" value="Trm112-like"/>
</dbReference>
<dbReference type="PANTHER" id="PTHR33505:SF4">
    <property type="entry name" value="PROTEIN PREY, MITOCHONDRIAL"/>
    <property type="match status" value="1"/>
</dbReference>
<dbReference type="PANTHER" id="PTHR33505">
    <property type="entry name" value="ZGC:162634"/>
    <property type="match status" value="1"/>
</dbReference>
<dbReference type="Pfam" id="PF03966">
    <property type="entry name" value="Trm112p"/>
    <property type="match status" value="1"/>
</dbReference>
<dbReference type="SUPFAM" id="SSF158997">
    <property type="entry name" value="Trm112p-like"/>
    <property type="match status" value="1"/>
</dbReference>
<gene>
    <name type="ordered locus">Bpro_2950</name>
</gene>
<keyword id="KW-1185">Reference proteome</keyword>
<evidence type="ECO:0000255" key="1">
    <source>
        <dbReference type="HAMAP-Rule" id="MF_01187"/>
    </source>
</evidence>
<comment type="similarity">
    <text evidence="1">Belongs to the UPF0434 family.</text>
</comment>
<sequence>MDTKLLELLVCPVTKGPLVYDREKQELISRSARLAYPVRDGLPVLLESEARTLTDEELGL</sequence>
<accession>Q129C8</accession>
<reference key="1">
    <citation type="journal article" date="2008" name="Appl. Environ. Microbiol.">
        <title>The genome of Polaromonas sp. strain JS666: insights into the evolution of a hydrocarbon- and xenobiotic-degrading bacterium, and features of relevance to biotechnology.</title>
        <authorList>
            <person name="Mattes T.E."/>
            <person name="Alexander A.K."/>
            <person name="Richardson P.M."/>
            <person name="Munk A.C."/>
            <person name="Han C.S."/>
            <person name="Stothard P."/>
            <person name="Coleman N.V."/>
        </authorList>
    </citation>
    <scope>NUCLEOTIDE SEQUENCE [LARGE SCALE GENOMIC DNA]</scope>
    <source>
        <strain>JS666 / ATCC BAA-500</strain>
    </source>
</reference>
<organism>
    <name type="scientific">Polaromonas sp. (strain JS666 / ATCC BAA-500)</name>
    <dbReference type="NCBI Taxonomy" id="296591"/>
    <lineage>
        <taxon>Bacteria</taxon>
        <taxon>Pseudomonadati</taxon>
        <taxon>Pseudomonadota</taxon>
        <taxon>Betaproteobacteria</taxon>
        <taxon>Burkholderiales</taxon>
        <taxon>Comamonadaceae</taxon>
        <taxon>Polaromonas</taxon>
    </lineage>
</organism>